<accession>A9KD35</accession>
<dbReference type="EMBL" id="CP000733">
    <property type="protein sequence ID" value="ABS76616.1"/>
    <property type="molecule type" value="Genomic_DNA"/>
</dbReference>
<dbReference type="RefSeq" id="WP_005771622.1">
    <property type="nucleotide sequence ID" value="NC_009727.1"/>
</dbReference>
<dbReference type="SMR" id="A9KD35"/>
<dbReference type="KEGG" id="cbd:CBUD_1858"/>
<dbReference type="HOGENOM" id="CLU_072226_1_1_6"/>
<dbReference type="Proteomes" id="UP000008555">
    <property type="component" value="Chromosome"/>
</dbReference>
<dbReference type="GO" id="GO:0015935">
    <property type="term" value="C:small ribosomal subunit"/>
    <property type="evidence" value="ECO:0007669"/>
    <property type="project" value="InterPro"/>
</dbReference>
<dbReference type="GO" id="GO:0019843">
    <property type="term" value="F:rRNA binding"/>
    <property type="evidence" value="ECO:0007669"/>
    <property type="project" value="UniProtKB-UniRule"/>
</dbReference>
<dbReference type="GO" id="GO:0003735">
    <property type="term" value="F:structural constituent of ribosome"/>
    <property type="evidence" value="ECO:0007669"/>
    <property type="project" value="InterPro"/>
</dbReference>
<dbReference type="GO" id="GO:0000049">
    <property type="term" value="F:tRNA binding"/>
    <property type="evidence" value="ECO:0007669"/>
    <property type="project" value="UniProtKB-UniRule"/>
</dbReference>
<dbReference type="GO" id="GO:0006412">
    <property type="term" value="P:translation"/>
    <property type="evidence" value="ECO:0007669"/>
    <property type="project" value="UniProtKB-UniRule"/>
</dbReference>
<dbReference type="CDD" id="cd14869">
    <property type="entry name" value="uS7_Bacteria"/>
    <property type="match status" value="1"/>
</dbReference>
<dbReference type="Gene3D" id="1.10.455.10">
    <property type="entry name" value="Ribosomal protein S7 domain"/>
    <property type="match status" value="1"/>
</dbReference>
<dbReference type="HAMAP" id="MF_00480_B">
    <property type="entry name" value="Ribosomal_uS7_B"/>
    <property type="match status" value="1"/>
</dbReference>
<dbReference type="InterPro" id="IPR000235">
    <property type="entry name" value="Ribosomal_uS7"/>
</dbReference>
<dbReference type="InterPro" id="IPR005717">
    <property type="entry name" value="Ribosomal_uS7_bac/org-type"/>
</dbReference>
<dbReference type="InterPro" id="IPR020606">
    <property type="entry name" value="Ribosomal_uS7_CS"/>
</dbReference>
<dbReference type="InterPro" id="IPR023798">
    <property type="entry name" value="Ribosomal_uS7_dom"/>
</dbReference>
<dbReference type="InterPro" id="IPR036823">
    <property type="entry name" value="Ribosomal_uS7_dom_sf"/>
</dbReference>
<dbReference type="NCBIfam" id="TIGR01029">
    <property type="entry name" value="rpsG_bact"/>
    <property type="match status" value="1"/>
</dbReference>
<dbReference type="PANTHER" id="PTHR11205">
    <property type="entry name" value="RIBOSOMAL PROTEIN S7"/>
    <property type="match status" value="1"/>
</dbReference>
<dbReference type="Pfam" id="PF00177">
    <property type="entry name" value="Ribosomal_S7"/>
    <property type="match status" value="1"/>
</dbReference>
<dbReference type="PIRSF" id="PIRSF002122">
    <property type="entry name" value="RPS7p_RPS7a_RPS5e_RPS7o"/>
    <property type="match status" value="1"/>
</dbReference>
<dbReference type="SUPFAM" id="SSF47973">
    <property type="entry name" value="Ribosomal protein S7"/>
    <property type="match status" value="1"/>
</dbReference>
<dbReference type="PROSITE" id="PS00052">
    <property type="entry name" value="RIBOSOMAL_S7"/>
    <property type="match status" value="1"/>
</dbReference>
<sequence>MARRKAAPKRETLPDPLFHSELLAKFINAVMRNGKKSVAEKIVYGALDVVAKRVQNKSGEQGDGDGESGGKAGGIKKRSLGDIRTDENARALALETFKGALDKVMPNVEVKSRRVGGSTYQVPVEIRMARRQALARRWLVEYANKRNEKTMVLRLAHEILDAVEGRGGAIKKREDVHRMAKANQAFAHYRW</sequence>
<organism>
    <name type="scientific">Coxiella burnetii (strain Dugway 5J108-111)</name>
    <dbReference type="NCBI Taxonomy" id="434922"/>
    <lineage>
        <taxon>Bacteria</taxon>
        <taxon>Pseudomonadati</taxon>
        <taxon>Pseudomonadota</taxon>
        <taxon>Gammaproteobacteria</taxon>
        <taxon>Legionellales</taxon>
        <taxon>Coxiellaceae</taxon>
        <taxon>Coxiella</taxon>
    </lineage>
</organism>
<feature type="chain" id="PRO_0000344290" description="Small ribosomal subunit protein uS7">
    <location>
        <begin position="1"/>
        <end position="191"/>
    </location>
</feature>
<feature type="region of interest" description="Disordered" evidence="2">
    <location>
        <begin position="56"/>
        <end position="80"/>
    </location>
</feature>
<protein>
    <recommendedName>
        <fullName evidence="1">Small ribosomal subunit protein uS7</fullName>
    </recommendedName>
    <alternativeName>
        <fullName evidence="3">30S ribosomal protein S7</fullName>
    </alternativeName>
</protein>
<evidence type="ECO:0000255" key="1">
    <source>
        <dbReference type="HAMAP-Rule" id="MF_00480"/>
    </source>
</evidence>
<evidence type="ECO:0000256" key="2">
    <source>
        <dbReference type="SAM" id="MobiDB-lite"/>
    </source>
</evidence>
<evidence type="ECO:0000305" key="3"/>
<keyword id="KW-0687">Ribonucleoprotein</keyword>
<keyword id="KW-0689">Ribosomal protein</keyword>
<keyword id="KW-0694">RNA-binding</keyword>
<keyword id="KW-0699">rRNA-binding</keyword>
<keyword id="KW-0820">tRNA-binding</keyword>
<proteinExistence type="inferred from homology"/>
<name>RS7_COXBN</name>
<comment type="function">
    <text evidence="1">One of the primary rRNA binding proteins, it binds directly to 16S rRNA where it nucleates assembly of the head domain of the 30S subunit. Is located at the subunit interface close to the decoding center, probably blocks exit of the E-site tRNA.</text>
</comment>
<comment type="subunit">
    <text evidence="1">Part of the 30S ribosomal subunit. Contacts proteins S9 and S11.</text>
</comment>
<comment type="similarity">
    <text evidence="1">Belongs to the universal ribosomal protein uS7 family.</text>
</comment>
<reference key="1">
    <citation type="journal article" date="2009" name="Infect. Immun.">
        <title>Comparative genomics reveal extensive transposon-mediated genomic plasticity and diversity among potential effector proteins within the genus Coxiella.</title>
        <authorList>
            <person name="Beare P.A."/>
            <person name="Unsworth N."/>
            <person name="Andoh M."/>
            <person name="Voth D.E."/>
            <person name="Omsland A."/>
            <person name="Gilk S.D."/>
            <person name="Williams K.P."/>
            <person name="Sobral B.W."/>
            <person name="Kupko J.J. III"/>
            <person name="Porcella S.F."/>
            <person name="Samuel J.E."/>
            <person name="Heinzen R.A."/>
        </authorList>
    </citation>
    <scope>NUCLEOTIDE SEQUENCE [LARGE SCALE GENOMIC DNA]</scope>
    <source>
        <strain>Dugway 5J108-111</strain>
    </source>
</reference>
<gene>
    <name evidence="1" type="primary">rpsG</name>
    <name type="ordered locus">CBUD_1858</name>
</gene>